<name>CO3_NAJNA</name>
<comment type="function">
    <text evidence="2">Precursor of non-enzymatic components of the classical, alternative, lectin and GZMK complement pathways, which consist in a cascade of proteins that leads to phagocytosis and breakdown of pathogens and signaling that strengthens the adaptive immune system.</text>
</comment>
<comment type="function">
    <molecule>Complement C3b</molecule>
    <text evidence="2">Non-enzymatic component of C5 convertase. Generated following cleavage by C3 convertase, it covalently attaches to the surface of pathogens, where it acts as an opsonin that marks the surface of antigens for removal. Complement C3b binds covalently via its reactive thioester, to cell surface carbohydrates or immune aggregates. Together with complement C4b, it then recruits the serine protease complement C2b to form the C5 convertase, which cleaves and activate C5, the next component of the complement pathways. In the alternative complement pathway, recruits the serine protease CFB to form the C5 convertase that cleaves and activates C5.</text>
</comment>
<comment type="function">
    <molecule>C3a anaphylatoxin</molecule>
    <text evidence="2">Mediator of local inflammatory process released following cleavage by C3 convertase. Acts by binding to its receptor, C3AR1, activating G protein-coupled receptor signaling, promoting the phosphorylation, ARRB2-mediated internalization and endocytosis of C3AR1. C3a anaphylatoxin stimulates the activation of immune cells such as mast cells and basophilic leukocytes to release inflammation agents, such as cytokines, chemokines and histamine, which promote inflammation development. Also acts as potent chemoattractant for the migration of macrophages and neutrophils to the inflamed tissues, resulting in neutralization of the inflammatory triggers by multiple ways, such as phagocytosis and generation of reactive oxidants.</text>
</comment>
<comment type="subunit">
    <text evidence="2">In absence of complement activation, the C3 precursor is first processed by the removal of 4 Arg residues, forming two chains, beta and alpha, linked by a disulfide bond.</text>
</comment>
<comment type="subunit">
    <molecule>Complement C3b</molecule>
    <text evidence="2">Complement C3b is composed of complement C3b and complement C3 beta chains that are associated via disulfide bonds. Non-enzymatic component of the C5 convertase, also named C4bC2bC3b, composed of the serine protease complement C2b (C2), complement C3b, as well as complement C4b (C4). Non-enzymatic component of the C5 convertase of the alternative complement pathways composed of the serine protease complement CFB and complement C3b. Interacts with CFP; interaction takes place together with CFB in the alternative complement system and allows the complex to become active. Interacts with CR1 (via Sushi 8 and Sushi 9 domains). Interacts with CFH.</text>
</comment>
<comment type="subcellular location">
    <subcellularLocation>
        <location evidence="2">Secreted</location>
    </subcellularLocation>
</comment>
<comment type="subcellular location">
    <molecule>Complement C3b</molecule>
    <subcellularLocation>
        <location evidence="2">Secreted</location>
    </subcellularLocation>
    <subcellularLocation>
        <location evidence="2">Cell surface</location>
    </subcellularLocation>
    <text evidence="2">Covalently associated with the surface of pathogens: the internal thioester bond reacts with carbohydrate antigens on the target surface to form amide or ester bonds.</text>
</comment>
<comment type="subcellular location">
    <molecule>C3a anaphylatoxin</molecule>
    <subcellularLocation>
        <location evidence="2">Secreted</location>
    </subcellularLocation>
</comment>
<comment type="PTM">
    <text evidence="2">C3 precursor is first processed by the removal of 4 Arg residues, forming two chains, beta and alpha, linked by a disulfide bond. During activation of the complement systems, the alpha chain is cleaved into C3a and C3b by the C3 convertase: C3b stays linked to the beta chain, while C3a is released in the plasma. The alpha chain is cleaved by the serine protease complement C2b component of the C3 convertase to generate C3a and C3b following activation by the classical, lectin and GZMK complement systems. The alpha chain is cleaved by CFB component of the C3 convertase to generate C3a and C3b following activation by the alternative complement system.</text>
</comment>
<comment type="PTM">
    <molecule>C3a anaphylatoxin</molecule>
    <text evidence="2">C3a is further processed by carboxypeptidases to release the C-terminal arginine residue generating the acylation stimulating protein (ASP). Levels of ASP are increased in adipocytes in the postprandial period and by insulin and dietary chylomicrons.</text>
</comment>
<comment type="PTM">
    <molecule>Complement C3b</molecule>
    <text evidence="2">Complement C3b is rapidly split in two positions by factor I (CFI) and a cofactor (CFH) to form iC3b (inactivated C3b) and C3f which is released. CFI and CFH catalyze proteolytic degradation of already-deposited complement C3b. Then iC3b is slowly cleaved (possibly by CFI) to form C3c (beta chain + alpha' chain fragment 1 + alpha' chain fragment 2), C3dg and C3f. Other proteases produce other fragments such as C3d or C3g.</text>
</comment>
<comment type="PTM">
    <molecule>Complement C3b</molecule>
    <text evidence="2">Upon activation, the internal thioester bond reacts with carbohydrate antigens on the target surface to form amide or ester bonds, leading to covalent association with the surface of pathogens.</text>
</comment>
<comment type="PTM">
    <molecule>Complement C3b</molecule>
    <text evidence="2">Complement C3b interacts with complement C4b via a thioester linkage.</text>
</comment>
<comment type="PTM">
    <text evidence="2">Phosphorylated by FAM20C in the extracellular medium.</text>
</comment>
<protein>
    <recommendedName>
        <fullName>Complement C3</fullName>
    </recommendedName>
    <component>
        <recommendedName>
            <fullName>Complement C3 beta chain</fullName>
        </recommendedName>
    </component>
    <component>
        <recommendedName>
            <fullName>Complement C3 alpha chain</fullName>
        </recommendedName>
    </component>
    <component>
        <recommendedName>
            <fullName>C3a anaphylatoxin</fullName>
        </recommendedName>
    </component>
    <component>
        <recommendedName>
            <fullName>Complement C3b</fullName>
        </recommendedName>
        <alternativeName>
            <fullName>Complement C3b-alpha' chain</fullName>
        </alternativeName>
    </component>
    <component>
        <recommendedName>
            <fullName>Complement C3f fragment</fullName>
        </recommendedName>
    </component>
</protein>
<dbReference type="EMBL" id="L02365">
    <property type="protein sequence ID" value="AAA49385.1"/>
    <property type="molecule type" value="mRNA"/>
</dbReference>
<dbReference type="SMR" id="Q01833"/>
<dbReference type="MEROPS" id="I39.950"/>
<dbReference type="OrthoDB" id="6359008at2759"/>
<dbReference type="Proteomes" id="UP000694559">
    <property type="component" value="Unplaced"/>
</dbReference>
<dbReference type="GO" id="GO:0005615">
    <property type="term" value="C:extracellular space"/>
    <property type="evidence" value="ECO:0007669"/>
    <property type="project" value="InterPro"/>
</dbReference>
<dbReference type="GO" id="GO:0004866">
    <property type="term" value="F:endopeptidase inhibitor activity"/>
    <property type="evidence" value="ECO:0007669"/>
    <property type="project" value="InterPro"/>
</dbReference>
<dbReference type="GO" id="GO:0006957">
    <property type="term" value="P:complement activation, alternative pathway"/>
    <property type="evidence" value="ECO:0007669"/>
    <property type="project" value="UniProtKB-KW"/>
</dbReference>
<dbReference type="GO" id="GO:0006958">
    <property type="term" value="P:complement activation, classical pathway"/>
    <property type="evidence" value="ECO:0007669"/>
    <property type="project" value="UniProtKB-KW"/>
</dbReference>
<dbReference type="GO" id="GO:0006954">
    <property type="term" value="P:inflammatory response"/>
    <property type="evidence" value="ECO:0007669"/>
    <property type="project" value="UniProtKB-KW"/>
</dbReference>
<dbReference type="CDD" id="cd00017">
    <property type="entry name" value="ANATO"/>
    <property type="match status" value="1"/>
</dbReference>
<dbReference type="CDD" id="cd02896">
    <property type="entry name" value="complement_C3_C4_C5"/>
    <property type="match status" value="1"/>
</dbReference>
<dbReference type="CDD" id="cd03583">
    <property type="entry name" value="NTR_complement_C3"/>
    <property type="match status" value="1"/>
</dbReference>
<dbReference type="FunFam" id="1.20.91.20:FF:000001">
    <property type="entry name" value="Complement C3"/>
    <property type="match status" value="1"/>
</dbReference>
<dbReference type="FunFam" id="2.20.130.20:FF:000001">
    <property type="entry name" value="Complement C3"/>
    <property type="match status" value="1"/>
</dbReference>
<dbReference type="FunFam" id="2.40.50.120:FF:000013">
    <property type="entry name" value="Complement C3"/>
    <property type="match status" value="1"/>
</dbReference>
<dbReference type="FunFam" id="2.60.40.10:FF:001013">
    <property type="entry name" value="Complement C3"/>
    <property type="match status" value="1"/>
</dbReference>
<dbReference type="FunFam" id="2.60.40.1930:FF:000008">
    <property type="entry name" value="Complement C3"/>
    <property type="match status" value="1"/>
</dbReference>
<dbReference type="FunFam" id="2.60.40.690:FF:000004">
    <property type="entry name" value="Complement C3"/>
    <property type="match status" value="1"/>
</dbReference>
<dbReference type="FunFam" id="2.60.40.10:FF:000155">
    <property type="entry name" value="complement C3 isoform X1"/>
    <property type="match status" value="1"/>
</dbReference>
<dbReference type="FunFam" id="2.60.40.1940:FF:000001">
    <property type="entry name" value="Complement component C3"/>
    <property type="match status" value="1"/>
</dbReference>
<dbReference type="Gene3D" id="1.50.10.20">
    <property type="match status" value="1"/>
</dbReference>
<dbReference type="Gene3D" id="2.20.130.20">
    <property type="match status" value="1"/>
</dbReference>
<dbReference type="Gene3D" id="2.40.50.120">
    <property type="match status" value="1"/>
</dbReference>
<dbReference type="Gene3D" id="2.60.120.1540">
    <property type="match status" value="1"/>
</dbReference>
<dbReference type="Gene3D" id="2.60.40.1930">
    <property type="match status" value="3"/>
</dbReference>
<dbReference type="Gene3D" id="2.60.40.1940">
    <property type="match status" value="1"/>
</dbReference>
<dbReference type="Gene3D" id="6.20.50.160">
    <property type="match status" value="1"/>
</dbReference>
<dbReference type="Gene3D" id="2.60.40.690">
    <property type="entry name" value="Alpha-macroglobulin, receptor-binding domain"/>
    <property type="match status" value="1"/>
</dbReference>
<dbReference type="Gene3D" id="1.20.91.20">
    <property type="entry name" value="Anaphylotoxins (complement system)"/>
    <property type="match status" value="1"/>
</dbReference>
<dbReference type="Gene3D" id="2.60.40.10">
    <property type="entry name" value="Immunoglobulins"/>
    <property type="match status" value="2"/>
</dbReference>
<dbReference type="InterPro" id="IPR009048">
    <property type="entry name" value="A-macroglobulin_rcpt-bd"/>
</dbReference>
<dbReference type="InterPro" id="IPR036595">
    <property type="entry name" value="A-macroglobulin_rcpt-bd_sf"/>
</dbReference>
<dbReference type="InterPro" id="IPR050473">
    <property type="entry name" value="A2M/Complement_sys"/>
</dbReference>
<dbReference type="InterPro" id="IPR011625">
    <property type="entry name" value="A2M_N_BRD"/>
</dbReference>
<dbReference type="InterPro" id="IPR047565">
    <property type="entry name" value="Alpha-macroglob_thiol-ester_cl"/>
</dbReference>
<dbReference type="InterPro" id="IPR011626">
    <property type="entry name" value="Alpha-macroglobulin_TED"/>
</dbReference>
<dbReference type="InterPro" id="IPR000020">
    <property type="entry name" value="Anaphylatoxin/fibulin"/>
</dbReference>
<dbReference type="InterPro" id="IPR018081">
    <property type="entry name" value="Anaphylatoxin_comp_syst"/>
</dbReference>
<dbReference type="InterPro" id="IPR001840">
    <property type="entry name" value="Anaphylatoxn_comp_syst_dom"/>
</dbReference>
<dbReference type="InterPro" id="IPR041425">
    <property type="entry name" value="C3/4/5_MG1"/>
</dbReference>
<dbReference type="InterPro" id="IPR049466">
    <property type="entry name" value="C3_CUB1"/>
</dbReference>
<dbReference type="InterPro" id="IPR048848">
    <property type="entry name" value="C3_CUB2"/>
</dbReference>
<dbReference type="InterPro" id="IPR013783">
    <property type="entry name" value="Ig-like_fold"/>
</dbReference>
<dbReference type="InterPro" id="IPR001599">
    <property type="entry name" value="Macroglobln_a2"/>
</dbReference>
<dbReference type="InterPro" id="IPR019742">
    <property type="entry name" value="MacrogloblnA2_CS"/>
</dbReference>
<dbReference type="InterPro" id="IPR002890">
    <property type="entry name" value="MG2"/>
</dbReference>
<dbReference type="InterPro" id="IPR041555">
    <property type="entry name" value="MG3"/>
</dbReference>
<dbReference type="InterPro" id="IPR040839">
    <property type="entry name" value="MG4"/>
</dbReference>
<dbReference type="InterPro" id="IPR001134">
    <property type="entry name" value="Netrin_domain"/>
</dbReference>
<dbReference type="InterPro" id="IPR018933">
    <property type="entry name" value="Netrin_module_non-TIMP"/>
</dbReference>
<dbReference type="InterPro" id="IPR035815">
    <property type="entry name" value="NTR_complement_C3"/>
</dbReference>
<dbReference type="InterPro" id="IPR008930">
    <property type="entry name" value="Terpenoid_cyclase/PrenylTrfase"/>
</dbReference>
<dbReference type="InterPro" id="IPR008993">
    <property type="entry name" value="TIMP-like_OB-fold"/>
</dbReference>
<dbReference type="PANTHER" id="PTHR11412:SF81">
    <property type="entry name" value="COMPLEMENT C3"/>
    <property type="match status" value="1"/>
</dbReference>
<dbReference type="PANTHER" id="PTHR11412">
    <property type="entry name" value="MACROGLOBULIN / COMPLEMENT"/>
    <property type="match status" value="1"/>
</dbReference>
<dbReference type="Pfam" id="PF00207">
    <property type="entry name" value="A2M"/>
    <property type="match status" value="1"/>
</dbReference>
<dbReference type="Pfam" id="PF07703">
    <property type="entry name" value="A2M_BRD"/>
    <property type="match status" value="1"/>
</dbReference>
<dbReference type="Pfam" id="PF07677">
    <property type="entry name" value="A2M_recep"/>
    <property type="match status" value="1"/>
</dbReference>
<dbReference type="Pfam" id="PF01821">
    <property type="entry name" value="ANATO"/>
    <property type="match status" value="1"/>
</dbReference>
<dbReference type="Pfam" id="PF21406">
    <property type="entry name" value="C3_CUB1"/>
    <property type="match status" value="1"/>
</dbReference>
<dbReference type="Pfam" id="PF21308">
    <property type="entry name" value="C3_CUB2"/>
    <property type="match status" value="1"/>
</dbReference>
<dbReference type="Pfam" id="PF17790">
    <property type="entry name" value="MG1"/>
    <property type="match status" value="1"/>
</dbReference>
<dbReference type="Pfam" id="PF01835">
    <property type="entry name" value="MG2"/>
    <property type="match status" value="1"/>
</dbReference>
<dbReference type="Pfam" id="PF17791">
    <property type="entry name" value="MG3"/>
    <property type="match status" value="1"/>
</dbReference>
<dbReference type="Pfam" id="PF17789">
    <property type="entry name" value="MG4"/>
    <property type="match status" value="1"/>
</dbReference>
<dbReference type="Pfam" id="PF01759">
    <property type="entry name" value="NTR"/>
    <property type="match status" value="1"/>
</dbReference>
<dbReference type="Pfam" id="PF07678">
    <property type="entry name" value="TED_complement"/>
    <property type="match status" value="1"/>
</dbReference>
<dbReference type="PRINTS" id="PR00004">
    <property type="entry name" value="ANAPHYLATOXN"/>
</dbReference>
<dbReference type="SMART" id="SM01360">
    <property type="entry name" value="A2M"/>
    <property type="match status" value="1"/>
</dbReference>
<dbReference type="SMART" id="SM01359">
    <property type="entry name" value="A2M_N_2"/>
    <property type="match status" value="1"/>
</dbReference>
<dbReference type="SMART" id="SM01361">
    <property type="entry name" value="A2M_recep"/>
    <property type="match status" value="1"/>
</dbReference>
<dbReference type="SMART" id="SM00104">
    <property type="entry name" value="ANATO"/>
    <property type="match status" value="1"/>
</dbReference>
<dbReference type="SMART" id="SM00643">
    <property type="entry name" value="C345C"/>
    <property type="match status" value="1"/>
</dbReference>
<dbReference type="SMART" id="SM01419">
    <property type="entry name" value="Thiol-ester_cl"/>
    <property type="match status" value="1"/>
</dbReference>
<dbReference type="SUPFAM" id="SSF49410">
    <property type="entry name" value="Alpha-macroglobulin receptor domain"/>
    <property type="match status" value="1"/>
</dbReference>
<dbReference type="SUPFAM" id="SSF47686">
    <property type="entry name" value="Anaphylotoxins (complement system)"/>
    <property type="match status" value="1"/>
</dbReference>
<dbReference type="SUPFAM" id="SSF48239">
    <property type="entry name" value="Terpenoid cyclases/Protein prenyltransferases"/>
    <property type="match status" value="1"/>
</dbReference>
<dbReference type="SUPFAM" id="SSF50242">
    <property type="entry name" value="TIMP-like"/>
    <property type="match status" value="1"/>
</dbReference>
<dbReference type="PROSITE" id="PS00477">
    <property type="entry name" value="ALPHA_2_MACROGLOBULIN"/>
    <property type="match status" value="1"/>
</dbReference>
<dbReference type="PROSITE" id="PS01177">
    <property type="entry name" value="ANAPHYLATOXIN_1"/>
    <property type="match status" value="1"/>
</dbReference>
<dbReference type="PROSITE" id="PS01178">
    <property type="entry name" value="ANAPHYLATOXIN_2"/>
    <property type="match status" value="1"/>
</dbReference>
<dbReference type="PROSITE" id="PS50189">
    <property type="entry name" value="NTR"/>
    <property type="match status" value="1"/>
</dbReference>
<proteinExistence type="evidence at transcript level"/>
<evidence type="ECO:0000250" key="1"/>
<evidence type="ECO:0000250" key="2">
    <source>
        <dbReference type="UniProtKB" id="P01024"/>
    </source>
</evidence>
<evidence type="ECO:0000255" key="3">
    <source>
        <dbReference type="PROSITE-ProRule" id="PRU00022"/>
    </source>
</evidence>
<evidence type="ECO:0000255" key="4">
    <source>
        <dbReference type="PROSITE-ProRule" id="PRU00295"/>
    </source>
</evidence>
<feature type="signal peptide" evidence="2">
    <location>
        <begin position="1"/>
        <end position="22"/>
    </location>
</feature>
<feature type="chain" id="PRO_0000288818" description="Complement C3">
    <location>
        <begin position="23"/>
        <end position="1651"/>
    </location>
</feature>
<feature type="chain" id="PRO_0000288819" description="Complement C3 beta chain">
    <location>
        <begin position="23"/>
        <end position="655"/>
    </location>
</feature>
<feature type="chain" id="PRO_0000288820" description="Complement C3 alpha chain">
    <location>
        <begin position="661"/>
        <end position="1651"/>
    </location>
</feature>
<feature type="peptide" id="PRO_0000288821" description="C3a anaphylatoxin" evidence="2">
    <location>
        <begin position="661"/>
        <end position="738"/>
    </location>
</feature>
<feature type="chain" id="PRO_0000288822" description="Complement C3b" evidence="2">
    <location>
        <begin position="739"/>
        <end position="1651"/>
    </location>
</feature>
<feature type="peptide" id="PRO_0000288823" description="Complement C3f fragment" evidence="1 2">
    <location>
        <begin position="1291"/>
        <end position="1307"/>
    </location>
</feature>
<feature type="domain" description="Anaphylatoxin-like" evidence="3">
    <location>
        <begin position="683"/>
        <end position="718"/>
    </location>
</feature>
<feature type="domain" description="NTR" evidence="4">
    <location>
        <begin position="1506"/>
        <end position="1649"/>
    </location>
</feature>
<feature type="region of interest" description="C3a-like domain">
    <location>
        <begin position="660"/>
        <end position="738"/>
    </location>
</feature>
<feature type="region of interest" description="C3d-like domain">
    <location>
        <begin position="991"/>
        <end position="1269"/>
    </location>
</feature>
<feature type="region of interest" description="Properdin-binding" evidence="2">
    <location>
        <begin position="1412"/>
        <end position="1444"/>
    </location>
</feature>
<feature type="site" description="Cleavage; by C3 convertase">
    <location>
        <begin position="738"/>
        <end position="739"/>
    </location>
</feature>
<feature type="site" description="Cleavage; by factor I" evidence="2">
    <location>
        <begin position="1290"/>
        <end position="1291"/>
    </location>
</feature>
<feature type="site" description="Cleavage; by factor I" evidence="2">
    <location>
        <begin position="1307"/>
        <end position="1308"/>
    </location>
</feature>
<feature type="disulfide bond" description="Interchain (between beta and alpha chains)" evidence="3 4">
    <location>
        <begin position="546"/>
        <end position="807"/>
    </location>
</feature>
<feature type="disulfide bond" evidence="2">
    <location>
        <begin position="615"/>
        <end position="650"/>
    </location>
</feature>
<feature type="disulfide bond" evidence="2">
    <location>
        <begin position="683"/>
        <end position="710"/>
    </location>
</feature>
<feature type="disulfide bond" evidence="2">
    <location>
        <begin position="684"/>
        <end position="717"/>
    </location>
</feature>
<feature type="disulfide bond" evidence="2">
    <location>
        <begin position="697"/>
        <end position="718"/>
    </location>
</feature>
<feature type="disulfide bond" evidence="2">
    <location>
        <begin position="863"/>
        <end position="1501"/>
    </location>
</feature>
<feature type="disulfide bond" evidence="2">
    <location>
        <begin position="1091"/>
        <end position="1147"/>
    </location>
</feature>
<feature type="disulfide bond" evidence="2">
    <location>
        <begin position="1346"/>
        <end position="1477"/>
    </location>
</feature>
<feature type="disulfide bond" evidence="2">
    <location>
        <begin position="1377"/>
        <end position="1446"/>
    </location>
</feature>
<feature type="disulfide bond" evidence="2">
    <location>
        <begin position="1494"/>
        <end position="1499"/>
    </location>
</feature>
<feature type="disulfide bond" evidence="2">
    <location>
        <begin position="1506"/>
        <end position="1578"/>
    </location>
</feature>
<feature type="disulfide bond" evidence="2">
    <location>
        <begin position="1525"/>
        <end position="1649"/>
    </location>
</feature>
<feature type="disulfide bond" evidence="2">
    <location>
        <begin position="1625"/>
        <end position="1634"/>
    </location>
</feature>
<feature type="cross-link" description="Isoglutamyl cysteine thioester (Cys-Gln)" evidence="2">
    <location>
        <begin position="999"/>
        <end position="1002"/>
    </location>
</feature>
<organism>
    <name type="scientific">Naja naja</name>
    <name type="common">Indian cobra</name>
    <dbReference type="NCBI Taxonomy" id="35670"/>
    <lineage>
        <taxon>Eukaryota</taxon>
        <taxon>Metazoa</taxon>
        <taxon>Chordata</taxon>
        <taxon>Craniata</taxon>
        <taxon>Vertebrata</taxon>
        <taxon>Euteleostomi</taxon>
        <taxon>Lepidosauria</taxon>
        <taxon>Squamata</taxon>
        <taxon>Bifurcata</taxon>
        <taxon>Unidentata</taxon>
        <taxon>Episquamata</taxon>
        <taxon>Toxicofera</taxon>
        <taxon>Serpentes</taxon>
        <taxon>Colubroidea</taxon>
        <taxon>Elapidae</taxon>
        <taxon>Elapinae</taxon>
        <taxon>Naja</taxon>
    </lineage>
</organism>
<keyword id="KW-0179">Complement alternate pathway</keyword>
<keyword id="KW-0180">Complement pathway</keyword>
<keyword id="KW-1015">Disulfide bond</keyword>
<keyword id="KW-0391">Immunity</keyword>
<keyword id="KW-0395">Inflammatory response</keyword>
<keyword id="KW-0399">Innate immunity</keyword>
<keyword id="KW-1185">Reference proteome</keyword>
<keyword id="KW-0964">Secreted</keyword>
<keyword id="KW-0732">Signal</keyword>
<keyword id="KW-0882">Thioester bond</keyword>
<sequence>MEGMALYLVAALLIGFPGSSHGALYTLITPAVLRTDTEEQILVEAHGDSTPKSLDIFVHDFPRKQKTLFQSRVDMNQAGSMFVTPTIKVPAKELNKDSKQNQYVVVKVTGPQVALEKVVLLSYQSGFVFIQTDKGIYTPGSPVRYRVFSVDHNMHRMDKTVIVEFQTPEGIVVSSKPVNPSGSIRPYNLPELVSFGTWKAVAKYEHSPEESYTAYFDVREYVLPSFEVRLQPSDKFLYIDGNKNFHVSITARYLYGKKVEGVAFVVFGVKIDDAKKSIPDSLTRIPIIDGDGEATLKRDTLRSRFQDLNQLVGHTLYVSVTVITESGSDMVVTEQGGIHIVTSPYQIYFTKTPKYFKPGMPYELTVYVTNPDGSPAAHVPVVSEAIHSEGTTLSDGTAKLILNTPLNIQSLPITVRTNHGDLPRERQAIKSMTATAYQTQGGSENYLHVAITSTEIKPGDNLPVNFNVRGNANSLNQIKYFTYLILNKGKIFKVGRQPRRDGQNLVTMNLHITPDLIPSFRFVAYYQVGNNEIVADSVWVDVKDTCMGTLVVKGASSRDDRIQKPGAAMKIKLEGDPGARVGLVAVDKAVYVLNDKYKISQAKIWDTIEKSDFGCTAGSGQNNLGVFEDAGLALTTSTNLNTKQRSAAKCPQPANRRRRSSVLLLDSKASKAAQFQDQGLRKCCEDGMHENPMGYTCEKRAKYIQEGDACKAAFLECCHYIKGIRDENQRESELFLARSDFEDELFGDDNIISRSDFPESWLWLTEELTGEPNNQGISSKTVPFYLRDSITTWELLAVGLSPTKGICVAEPYEITVMKDFFIDLRLPYSVVKNEQVEIRAILYNYADEDIYVRVELIYNPAFCSASTEGQRYRQQFPIKALSSRAVPFVIVPLEQGLHDVEVIASVRGELASDGVRKKLKVVPEGERKNIVTIIELDPSVKGVGGTQELTVIANKLDDKVPDTEVETRISVLGDPVAQIIENSIDGSKLNHLIITPSGCGEQNMITMTPSVIATYYLDATGQWENLGVDRRTEAIKQIMTGYAQQMVYKKADHSYAAFTNRASSSWLTAYVVKVLAMASNMVKDISHEIICGGVKWLILNRQQPDGVFKENAPVIHGEMLGGTKGAEPEASLTAFIVTALLESRSVCKEQINILDSSINKATDYLLKKYEKLQRPYTTALTAYALAAADRLNDDRVLMAASTGRNRWEEYNARTHNIEGTSYALLALLKMKKFAEVGPVVRWLIDQKYYGGTYGQTQATVMVFQALAEYEIQMPTHQDLNLDISIKLPEREVPERYSINDRNAVQARTVETKLNEDFTVSASGDGKATMTILTVYNAQLREDANVCNKFHLDVSVENVELNLKQAKGGKAALRLKICTRYLGEVDSTMTIIDISMLTGFFPDAEDLKRLSNGVDRYISKFEIDNNMAQKGTVVIYLDKVSHSEDECLHFKIHKHFEVGFIQPGSVKVYSYYNLDEQCTKFYHPDKETGLLNKICHGNICRCAEETCSLLNQQKKIDLQLRIQKACAQNVDYVYKTKLLRIEEKDGNDIYFMDVLEVIKGGTDRNAQAKARQYVSQRKCQEALNLKLDNDYLIWGLSSDLWPMKDDISYLITKNTWIERWPNEDECQDEEFQNLCDDFAQLSNTLTIFGCPT</sequence>
<accession>Q01833</accession>
<gene>
    <name type="primary">C3</name>
</gene>
<reference key="1">
    <citation type="journal article" date="1992" name="J. Immunol.">
        <title>Primary structure of cobra complement component C3.</title>
        <authorList>
            <person name="Fritzinger D.C."/>
            <person name="Connelly M."/>
            <person name="Petrella E.C."/>
            <person name="Bredehorst R."/>
            <person name="Vogel C.-W."/>
        </authorList>
    </citation>
    <scope>NUCLEOTIDE SEQUENCE [MRNA]</scope>
    <source>
        <tissue>Liver</tissue>
    </source>
</reference>